<protein>
    <recommendedName>
        <fullName>Trafficking protein particle complex subunit BET5</fullName>
        <shortName>TRAPP subunit BET5</shortName>
    </recommendedName>
    <alternativeName>
        <fullName>Transport protein particle 18 kDa subunit</fullName>
    </alternativeName>
</protein>
<dbReference type="EMBL" id="Z46373">
    <property type="protein sequence ID" value="CAA86501.1"/>
    <property type="molecule type" value="Genomic_DNA"/>
</dbReference>
<dbReference type="EMBL" id="AY557760">
    <property type="protein sequence ID" value="AAS56086.1"/>
    <property type="molecule type" value="Genomic_DNA"/>
</dbReference>
<dbReference type="EMBL" id="BK006946">
    <property type="protein sequence ID" value="DAA09820.1"/>
    <property type="molecule type" value="Genomic_DNA"/>
</dbReference>
<dbReference type="PIR" id="S48820">
    <property type="entry name" value="S48820"/>
</dbReference>
<dbReference type="RefSeq" id="NP_013634.1">
    <property type="nucleotide sequence ID" value="NM_001182436.1"/>
</dbReference>
<dbReference type="PDB" id="3CUE">
    <property type="method" value="X-ray"/>
    <property type="resolution" value="3.70 A"/>
    <property type="chains" value="C/I/O/U=1-159"/>
</dbReference>
<dbReference type="PDB" id="7E2C">
    <property type="method" value="EM"/>
    <property type="resolution" value="4.18 A"/>
    <property type="chains" value="D=1-159"/>
</dbReference>
<dbReference type="PDB" id="7E2D">
    <property type="method" value="EM"/>
    <property type="resolution" value="3.71 A"/>
    <property type="chains" value="D=1-159"/>
</dbReference>
<dbReference type="PDB" id="7E8S">
    <property type="method" value="EM"/>
    <property type="resolution" value="4.36 A"/>
    <property type="chains" value="D/O=1-159"/>
</dbReference>
<dbReference type="PDB" id="7E8T">
    <property type="method" value="EM"/>
    <property type="resolution" value="3.80 A"/>
    <property type="chains" value="D=1-159"/>
</dbReference>
<dbReference type="PDB" id="7E93">
    <property type="method" value="EM"/>
    <property type="resolution" value="6.54 A"/>
    <property type="chains" value="D/O=1-159"/>
</dbReference>
<dbReference type="PDB" id="7E94">
    <property type="method" value="EM"/>
    <property type="resolution" value="4.67 A"/>
    <property type="chains" value="D/O=1-159"/>
</dbReference>
<dbReference type="PDB" id="7EA3">
    <property type="method" value="EM"/>
    <property type="resolution" value="4.31 A"/>
    <property type="chains" value="D/Q=1-159"/>
</dbReference>
<dbReference type="PDB" id="7KMT">
    <property type="method" value="EM"/>
    <property type="resolution" value="3.70 A"/>
    <property type="chains" value="G=1-159"/>
</dbReference>
<dbReference type="PDB" id="7U05">
    <property type="method" value="EM"/>
    <property type="resolution" value="3.70 A"/>
    <property type="chains" value="G/g=1-159"/>
</dbReference>
<dbReference type="PDB" id="7U06">
    <property type="method" value="EM"/>
    <property type="resolution" value="4.20 A"/>
    <property type="chains" value="G/g=1-159"/>
</dbReference>
<dbReference type="PDBsum" id="3CUE"/>
<dbReference type="PDBsum" id="7E2C"/>
<dbReference type="PDBsum" id="7E2D"/>
<dbReference type="PDBsum" id="7E8S"/>
<dbReference type="PDBsum" id="7E8T"/>
<dbReference type="PDBsum" id="7E93"/>
<dbReference type="PDBsum" id="7E94"/>
<dbReference type="PDBsum" id="7EA3"/>
<dbReference type="PDBsum" id="7KMT"/>
<dbReference type="PDBsum" id="7U05"/>
<dbReference type="PDBsum" id="7U06"/>
<dbReference type="EMDB" id="EMD-22928"/>
<dbReference type="EMDB" id="EMD-26254"/>
<dbReference type="EMDB" id="EMD-26255"/>
<dbReference type="EMDB" id="EMD-30954"/>
<dbReference type="EMDB" id="EMD-30955"/>
<dbReference type="EMDB" id="EMD-31021"/>
<dbReference type="EMDB" id="EMD-31022"/>
<dbReference type="EMDB" id="EMD-31027"/>
<dbReference type="EMDB" id="EMD-31028"/>
<dbReference type="EMDB" id="EMD-31038"/>
<dbReference type="SMR" id="Q03630"/>
<dbReference type="BioGRID" id="35064">
    <property type="interactions" value="453"/>
</dbReference>
<dbReference type="ComplexPortal" id="CPX-1383">
    <property type="entry name" value="TRAPPIII protein complex"/>
</dbReference>
<dbReference type="ComplexPortal" id="CPX-1939">
    <property type="entry name" value="TRAPP II complex"/>
</dbReference>
<dbReference type="ComplexPortal" id="CPX-1940">
    <property type="entry name" value="TRAPPI protein complex"/>
</dbReference>
<dbReference type="DIP" id="DIP-4528N"/>
<dbReference type="FunCoup" id="Q03630">
    <property type="interactions" value="602"/>
</dbReference>
<dbReference type="IntAct" id="Q03630">
    <property type="interactions" value="11"/>
</dbReference>
<dbReference type="STRING" id="4932.YML077W"/>
<dbReference type="PaxDb" id="4932-YML077W"/>
<dbReference type="PeptideAtlas" id="Q03630"/>
<dbReference type="EnsemblFungi" id="YML077W_mRNA">
    <property type="protein sequence ID" value="YML077W"/>
    <property type="gene ID" value="YML077W"/>
</dbReference>
<dbReference type="GeneID" id="854898"/>
<dbReference type="KEGG" id="sce:YML077W"/>
<dbReference type="AGR" id="SGD:S000004542"/>
<dbReference type="SGD" id="S000004542">
    <property type="gene designation" value="BET5"/>
</dbReference>
<dbReference type="VEuPathDB" id="FungiDB:YML077W"/>
<dbReference type="eggNOG" id="KOG3368">
    <property type="taxonomic scope" value="Eukaryota"/>
</dbReference>
<dbReference type="GeneTree" id="ENSGT00940000153761"/>
<dbReference type="HOGENOM" id="CLU_053380_4_0_1"/>
<dbReference type="InParanoid" id="Q03630"/>
<dbReference type="OMA" id="GKLMYGM"/>
<dbReference type="OrthoDB" id="3364529at2759"/>
<dbReference type="BioCyc" id="YEAST:G3O-32669-MONOMER"/>
<dbReference type="Reactome" id="R-SCE-204005">
    <property type="pathway name" value="COPII-mediated vesicle transport"/>
</dbReference>
<dbReference type="Reactome" id="R-SCE-6798695">
    <property type="pathway name" value="Neutrophil degranulation"/>
</dbReference>
<dbReference type="Reactome" id="R-SCE-8876198">
    <property type="pathway name" value="RAB GEFs exchange GTP for GDP on RABs"/>
</dbReference>
<dbReference type="BioGRID-ORCS" id="854898">
    <property type="hits" value="0 hits in 10 CRISPR screens"/>
</dbReference>
<dbReference type="EvolutionaryTrace" id="Q03630"/>
<dbReference type="PRO" id="PR:Q03630"/>
<dbReference type="Proteomes" id="UP000002311">
    <property type="component" value="Chromosome XIII"/>
</dbReference>
<dbReference type="RNAct" id="Q03630">
    <property type="molecule type" value="protein"/>
</dbReference>
<dbReference type="GO" id="GO:0005829">
    <property type="term" value="C:cytosol"/>
    <property type="evidence" value="ECO:0007669"/>
    <property type="project" value="GOC"/>
</dbReference>
<dbReference type="GO" id="GO:0005783">
    <property type="term" value="C:endoplasmic reticulum"/>
    <property type="evidence" value="ECO:0007669"/>
    <property type="project" value="UniProtKB-SubCell"/>
</dbReference>
<dbReference type="GO" id="GO:0000407">
    <property type="term" value="C:phagophore assembly site"/>
    <property type="evidence" value="ECO:0000303"/>
    <property type="project" value="ComplexPortal"/>
</dbReference>
<dbReference type="GO" id="GO:0030008">
    <property type="term" value="C:TRAPP complex"/>
    <property type="evidence" value="ECO:0000318"/>
    <property type="project" value="GO_Central"/>
</dbReference>
<dbReference type="GO" id="GO:1990070">
    <property type="term" value="C:TRAPPI protein complex"/>
    <property type="evidence" value="ECO:0000314"/>
    <property type="project" value="SGD"/>
</dbReference>
<dbReference type="GO" id="GO:1990071">
    <property type="term" value="C:TRAPPII protein complex"/>
    <property type="evidence" value="ECO:0000314"/>
    <property type="project" value="SGD"/>
</dbReference>
<dbReference type="GO" id="GO:1990072">
    <property type="term" value="C:TRAPPIII protein complex"/>
    <property type="evidence" value="ECO:0000314"/>
    <property type="project" value="SGD"/>
</dbReference>
<dbReference type="GO" id="GO:0006888">
    <property type="term" value="P:endoplasmic reticulum to Golgi vesicle-mediated transport"/>
    <property type="evidence" value="ECO:0000314"/>
    <property type="project" value="ComplexPortal"/>
</dbReference>
<dbReference type="GO" id="GO:0006891">
    <property type="term" value="P:intra-Golgi vesicle-mediated transport"/>
    <property type="evidence" value="ECO:0000303"/>
    <property type="project" value="ComplexPortal"/>
</dbReference>
<dbReference type="GO" id="GO:0016236">
    <property type="term" value="P:macroautophagy"/>
    <property type="evidence" value="ECO:0000303"/>
    <property type="project" value="ComplexPortal"/>
</dbReference>
<dbReference type="GO" id="GO:0042147">
    <property type="term" value="P:retrograde transport, endosome to Golgi"/>
    <property type="evidence" value="ECO:0000303"/>
    <property type="project" value="ComplexPortal"/>
</dbReference>
<dbReference type="CDD" id="cd14855">
    <property type="entry name" value="TRAPPC1_MUM2"/>
    <property type="match status" value="1"/>
</dbReference>
<dbReference type="FunFam" id="3.30.450.70:FF:000015">
    <property type="entry name" value="Component of TRAPP complex"/>
    <property type="match status" value="1"/>
</dbReference>
<dbReference type="Gene3D" id="3.30.450.70">
    <property type="match status" value="1"/>
</dbReference>
<dbReference type="InterPro" id="IPR011012">
    <property type="entry name" value="Longin-like_dom_sf"/>
</dbReference>
<dbReference type="InterPro" id="IPR007233">
    <property type="entry name" value="TRAPPC"/>
</dbReference>
<dbReference type="PANTHER" id="PTHR23249">
    <property type="entry name" value="TRAFFICKING PROTEIN PARTICLE COMPLEX SUBUNIT"/>
    <property type="match status" value="1"/>
</dbReference>
<dbReference type="PANTHER" id="PTHR23249:SF16">
    <property type="entry name" value="TRAFFICKING PROTEIN PARTICLE COMPLEX SUBUNIT 1"/>
    <property type="match status" value="1"/>
</dbReference>
<dbReference type="Pfam" id="PF04099">
    <property type="entry name" value="Sybindin"/>
    <property type="match status" value="1"/>
</dbReference>
<dbReference type="SMART" id="SM01399">
    <property type="entry name" value="Sybindin"/>
    <property type="match status" value="1"/>
</dbReference>
<dbReference type="SUPFAM" id="SSF64356">
    <property type="entry name" value="SNARE-like"/>
    <property type="match status" value="1"/>
</dbReference>
<reference key="1">
    <citation type="journal article" date="1997" name="Nature">
        <title>The nucleotide sequence of Saccharomyces cerevisiae chromosome XIII.</title>
        <authorList>
            <person name="Bowman S."/>
            <person name="Churcher C.M."/>
            <person name="Badcock K."/>
            <person name="Brown D."/>
            <person name="Chillingworth T."/>
            <person name="Connor R."/>
            <person name="Dedman K."/>
            <person name="Devlin K."/>
            <person name="Gentles S."/>
            <person name="Hamlin N."/>
            <person name="Hunt S."/>
            <person name="Jagels K."/>
            <person name="Lye G."/>
            <person name="Moule S."/>
            <person name="Odell C."/>
            <person name="Pearson D."/>
            <person name="Rajandream M.A."/>
            <person name="Rice P."/>
            <person name="Skelton J."/>
            <person name="Walsh S.V."/>
            <person name="Whitehead S."/>
            <person name="Barrell B.G."/>
        </authorList>
    </citation>
    <scope>NUCLEOTIDE SEQUENCE [LARGE SCALE GENOMIC DNA]</scope>
    <source>
        <strain>ATCC 204508 / S288c</strain>
    </source>
</reference>
<reference key="2">
    <citation type="journal article" date="2014" name="G3 (Bethesda)">
        <title>The reference genome sequence of Saccharomyces cerevisiae: Then and now.</title>
        <authorList>
            <person name="Engel S.R."/>
            <person name="Dietrich F.S."/>
            <person name="Fisk D.G."/>
            <person name="Binkley G."/>
            <person name="Balakrishnan R."/>
            <person name="Costanzo M.C."/>
            <person name="Dwight S.S."/>
            <person name="Hitz B.C."/>
            <person name="Karra K."/>
            <person name="Nash R.S."/>
            <person name="Weng S."/>
            <person name="Wong E.D."/>
            <person name="Lloyd P."/>
            <person name="Skrzypek M.S."/>
            <person name="Miyasato S.R."/>
            <person name="Simison M."/>
            <person name="Cherry J.M."/>
        </authorList>
    </citation>
    <scope>GENOME REANNOTATION</scope>
    <source>
        <strain>ATCC 204508 / S288c</strain>
    </source>
</reference>
<reference key="3">
    <citation type="journal article" date="2007" name="Genome Res.">
        <title>Approaching a complete repository of sequence-verified protein-encoding clones for Saccharomyces cerevisiae.</title>
        <authorList>
            <person name="Hu Y."/>
            <person name="Rolfs A."/>
            <person name="Bhullar B."/>
            <person name="Murthy T.V.S."/>
            <person name="Zhu C."/>
            <person name="Berger M.F."/>
            <person name="Camargo A.A."/>
            <person name="Kelley F."/>
            <person name="McCarron S."/>
            <person name="Jepson D."/>
            <person name="Richardson A."/>
            <person name="Raphael J."/>
            <person name="Moreira D."/>
            <person name="Taycher E."/>
            <person name="Zuo D."/>
            <person name="Mohr S."/>
            <person name="Kane M.F."/>
            <person name="Williamson J."/>
            <person name="Simpson A.J.G."/>
            <person name="Bulyk M.L."/>
            <person name="Harlow E."/>
            <person name="Marsischky G."/>
            <person name="Kolodner R.D."/>
            <person name="LaBaer J."/>
        </authorList>
    </citation>
    <scope>NUCLEOTIDE SEQUENCE [GENOMIC DNA]</scope>
    <source>
        <strain>ATCC 204508 / S288c</strain>
    </source>
</reference>
<reference key="4">
    <citation type="journal article" date="1998" name="Genetics">
        <title>A high copy suppressor screen reveals genetic interactions between BET3 and a new gene. Evidence for a novel complex in ER-to-Golgi transport.</title>
        <authorList>
            <person name="Jiang Y."/>
            <person name="Scarpa A."/>
            <person name="Zhang L."/>
            <person name="Stone S."/>
            <person name="Feliciano E."/>
            <person name="Ferro-Novick S."/>
        </authorList>
    </citation>
    <scope>FUNCTION</scope>
</reference>
<reference key="5">
    <citation type="journal article" date="1998" name="EMBO J.">
        <title>TRAPP, a highly conserved novel complex on the cis-Golgi that mediates vesicle docking and fusion.</title>
        <authorList>
            <person name="Sacher M."/>
            <person name="Jiang Y."/>
            <person name="Barrowman J."/>
            <person name="Scarpa A."/>
            <person name="Burston J."/>
            <person name="Zhang L."/>
            <person name="Schieltz D."/>
            <person name="Yates J.R. III"/>
            <person name="Abeliovich H."/>
            <person name="Ferro-Novick S."/>
        </authorList>
    </citation>
    <scope>IDENTIFICATION IN THE TRAPP II COMPLEX</scope>
</reference>
<reference key="6">
    <citation type="journal article" date="2001" name="Mol. Cell">
        <title>TRAPP I implicated in the specificity of tethering in ER-to-Golgi transport.</title>
        <authorList>
            <person name="Sacher M."/>
            <person name="Barrowman J."/>
            <person name="Wang W."/>
            <person name="Horecka J."/>
            <person name="Zhang Y."/>
            <person name="Pypaert M."/>
            <person name="Ferro-Novick S."/>
        </authorList>
    </citation>
    <scope>FUNCTION OF THE TRAPP II COMPLEX</scope>
    <scope>IDENTIFICATION IN THE TRAPP II COMPLEX</scope>
    <scope>FUNCTION OF THE TRAPP I COMPLEX</scope>
    <scope>IDENTIFICATION IN THE TRAPP I COMPLEX</scope>
    <scope>SUBCELLULAR LOCATION</scope>
</reference>
<reference key="7">
    <citation type="journal article" date="2010" name="Nat. Struct. Mol. Biol.">
        <title>Molecular architecture of the TRAPPII complex and implications for vesicle tethering.</title>
        <authorList>
            <person name="Yip C.K."/>
            <person name="Berscheminski J."/>
            <person name="Walz T."/>
        </authorList>
    </citation>
    <scope>IDENTIFICATION IN THE TRAP II COMPLEX</scope>
    <scope>FUNCTION OF THE TRAP II COMPLEX</scope>
</reference>
<reference key="8">
    <citation type="journal article" date="2010" name="Proc. Natl. Acad. Sci. U.S.A.">
        <title>Trs85 directs a Ypt1 GEF, TRAPPIII, to the phagophore to promote autophagy.</title>
        <authorList>
            <person name="Lynch-Day M.A."/>
            <person name="Bhandari D."/>
            <person name="Menon S."/>
            <person name="Huang J."/>
            <person name="Cai H."/>
            <person name="Bartholomew C.R."/>
            <person name="Brumell J.H."/>
            <person name="Ferro-Novick S."/>
            <person name="Klionsky D.J."/>
        </authorList>
    </citation>
    <scope>IDENTIFICATION IN THE TRAPP III COMPLEX</scope>
    <scope>SUBCELLULAR LOCATION</scope>
    <scope>FUNCTION OF THE TRAPP III COMPLEX</scope>
</reference>
<evidence type="ECO:0000269" key="1">
    <source>
    </source>
</evidence>
<evidence type="ECO:0000269" key="2">
    <source>
    </source>
</evidence>
<evidence type="ECO:0000269" key="3">
    <source>
    </source>
</evidence>
<evidence type="ECO:0000269" key="4">
    <source>
    </source>
</evidence>
<evidence type="ECO:0000269" key="5">
    <source>
    </source>
</evidence>
<evidence type="ECO:0000305" key="6"/>
<feature type="chain" id="PRO_0000211565" description="Trafficking protein particle complex subunit BET5">
    <location>
        <begin position="1"/>
        <end position="159"/>
    </location>
</feature>
<comment type="function">
    <text evidence="1 2 3 5">Component of the TRAPP I, TRAPP II and TRAPP III complexes which act as guanine nucleotide exchange factors (GEF) for YPT1. TRAPP I plays a key role in the late stages of endoplasmic reticulum to Golgi traffic. TRAPP II plays a role in intra-Golgi transport. TRAPP III plays a role in autophagosome formation. Required for sporulation. Has a role late in meiosis following DNA replication.</text>
</comment>
<comment type="subunit">
    <text evidence="1 2 3 4">Part of the multisubunit TRAPP (transport protein particle) I complex composed of BET3, BET5, TRS20, TRS23, TRS31 and TRS33. Part of the multisubunit TRAPP (transport protein particle) II complex composed of BET3, BET5, TRS20, TRS23, TRS31, TRS33, TRS65, TRS85, TRS120 and TRS130. Part of the multisubunit TRAPP (transport protein particle) III complex composed of BET3, BET5, TRS20, TRS23, TRS31, TRS33 and TRS85.</text>
</comment>
<comment type="interaction">
    <interactant intactId="EBI-3580">
        <id>Q03630</id>
    </interactant>
    <interactant intactId="EBI-3567">
        <id>P36149</id>
        <label>BET3</label>
    </interactant>
    <organismsDiffer>false</organismsDiffer>
    <experiments>12</experiments>
</comment>
<comment type="interaction">
    <interactant intactId="EBI-3580">
        <id>Q03630</id>
    </interactant>
    <interactant intactId="EBI-19480">
        <id>Q99394</id>
        <label>TRS33</label>
    </interactant>
    <organismsDiffer>false</organismsDiffer>
    <experiments>2</experiments>
</comment>
<comment type="subcellular location">
    <subcellularLocation>
        <location>Golgi apparatus</location>
        <location>cis-Golgi network</location>
    </subcellularLocation>
    <subcellularLocation>
        <location>Endoplasmic reticulum</location>
    </subcellularLocation>
    <subcellularLocation>
        <location>Preautophagosomal structure</location>
    </subcellularLocation>
</comment>
<comment type="similarity">
    <text evidence="6">Belongs to the TRAPP small subunits family. BET5 subfamily.</text>
</comment>
<keyword id="KW-0002">3D-structure</keyword>
<keyword id="KW-0072">Autophagy</keyword>
<keyword id="KW-0256">Endoplasmic reticulum</keyword>
<keyword id="KW-0931">ER-Golgi transport</keyword>
<keyword id="KW-0333">Golgi apparatus</keyword>
<keyword id="KW-1185">Reference proteome</keyword>
<keyword id="KW-0813">Transport</keyword>
<sequence>MGIYSFWIFDRHCNCIFDREWTLASNSASGTINSKQNEEDAKLLYGMIFSLRSITQKLSKGSVKNDIRSISTGKYRVHTYCTASGLWFVLLSDFKQQSYTQVLQYIYSHIYVKYVSNNLLSPYDFAENENEMRGQGTRKITNRNFISVLESFLAPMVNQ</sequence>
<gene>
    <name type="primary">BET5</name>
    <name type="ordered locus">YML077W</name>
</gene>
<organism>
    <name type="scientific">Saccharomyces cerevisiae (strain ATCC 204508 / S288c)</name>
    <name type="common">Baker's yeast</name>
    <dbReference type="NCBI Taxonomy" id="559292"/>
    <lineage>
        <taxon>Eukaryota</taxon>
        <taxon>Fungi</taxon>
        <taxon>Dikarya</taxon>
        <taxon>Ascomycota</taxon>
        <taxon>Saccharomycotina</taxon>
        <taxon>Saccharomycetes</taxon>
        <taxon>Saccharomycetales</taxon>
        <taxon>Saccharomycetaceae</taxon>
        <taxon>Saccharomyces</taxon>
    </lineage>
</organism>
<name>BET5_YEAST</name>
<proteinExistence type="evidence at protein level"/>
<accession>Q03630</accession>
<accession>D6W0K6</accession>